<dbReference type="EC" id="3.6.5.-"/>
<dbReference type="EMBL" id="M95797">
    <property type="protein sequence ID" value="AAA35309.1"/>
    <property type="molecule type" value="mRNA"/>
</dbReference>
<dbReference type="EMBL" id="CU329671">
    <property type="protein sequence ID" value="CAB10083.1"/>
    <property type="molecule type" value="Genomic_DNA"/>
</dbReference>
<dbReference type="PIR" id="S28605">
    <property type="entry name" value="S28605"/>
</dbReference>
<dbReference type="RefSeq" id="NP_596568.1">
    <property type="nucleotide sequence ID" value="NM_001022489.2"/>
</dbReference>
<dbReference type="SMR" id="Q01475"/>
<dbReference type="BioGRID" id="276967">
    <property type="interactions" value="13"/>
</dbReference>
<dbReference type="FunCoup" id="Q01475">
    <property type="interactions" value="579"/>
</dbReference>
<dbReference type="STRING" id="284812.Q01475"/>
<dbReference type="iPTMnet" id="Q01475"/>
<dbReference type="PaxDb" id="4896-SPBC31F10.06c.1"/>
<dbReference type="EnsemblFungi" id="SPBC31F10.06c.1">
    <property type="protein sequence ID" value="SPBC31F10.06c.1:pep"/>
    <property type="gene ID" value="SPBC31F10.06c"/>
</dbReference>
<dbReference type="GeneID" id="2540439"/>
<dbReference type="KEGG" id="spo:2540439"/>
<dbReference type="PomBase" id="SPBC31F10.06c">
    <property type="gene designation" value="sar1"/>
</dbReference>
<dbReference type="VEuPathDB" id="FungiDB:SPBC31F10.06c"/>
<dbReference type="eggNOG" id="KOG0077">
    <property type="taxonomic scope" value="Eukaryota"/>
</dbReference>
<dbReference type="HOGENOM" id="CLU_040729_6_0_1"/>
<dbReference type="InParanoid" id="Q01475"/>
<dbReference type="OMA" id="GLWNKHG"/>
<dbReference type="PhylomeDB" id="Q01475"/>
<dbReference type="Reactome" id="R-SPO-204005">
    <property type="pathway name" value="COPII-mediated vesicle transport"/>
</dbReference>
<dbReference type="Reactome" id="R-SPO-5694530">
    <property type="pathway name" value="Cargo concentration in the ER"/>
</dbReference>
<dbReference type="Reactome" id="R-SPO-983170">
    <property type="pathway name" value="Antigen Presentation: Folding, assembly and peptide loading of class I MHC"/>
</dbReference>
<dbReference type="PRO" id="PR:Q01475"/>
<dbReference type="Proteomes" id="UP000002485">
    <property type="component" value="Chromosome II"/>
</dbReference>
<dbReference type="GO" id="GO:0030127">
    <property type="term" value="C:COPII vesicle coat"/>
    <property type="evidence" value="ECO:0000318"/>
    <property type="project" value="GO_Central"/>
</dbReference>
<dbReference type="GO" id="GO:0005737">
    <property type="term" value="C:cytoplasm"/>
    <property type="evidence" value="ECO:0007005"/>
    <property type="project" value="PomBase"/>
</dbReference>
<dbReference type="GO" id="GO:0005783">
    <property type="term" value="C:endoplasmic reticulum"/>
    <property type="evidence" value="ECO:0007005"/>
    <property type="project" value="PomBase"/>
</dbReference>
<dbReference type="GO" id="GO:0070971">
    <property type="term" value="C:endoplasmic reticulum exit site"/>
    <property type="evidence" value="ECO:0000318"/>
    <property type="project" value="GO_Central"/>
</dbReference>
<dbReference type="GO" id="GO:0005789">
    <property type="term" value="C:endoplasmic reticulum membrane"/>
    <property type="evidence" value="ECO:0000304"/>
    <property type="project" value="PomBase"/>
</dbReference>
<dbReference type="GO" id="GO:0000139">
    <property type="term" value="C:Golgi membrane"/>
    <property type="evidence" value="ECO:0007669"/>
    <property type="project" value="UniProtKB-SubCell"/>
</dbReference>
<dbReference type="GO" id="GO:0005525">
    <property type="term" value="F:GTP binding"/>
    <property type="evidence" value="ECO:0000255"/>
    <property type="project" value="PomBase"/>
</dbReference>
<dbReference type="GO" id="GO:0003924">
    <property type="term" value="F:GTPase activity"/>
    <property type="evidence" value="ECO:0000318"/>
    <property type="project" value="GO_Central"/>
</dbReference>
<dbReference type="GO" id="GO:0090158">
    <property type="term" value="P:endoplasmic reticulum membrane organization"/>
    <property type="evidence" value="ECO:0000315"/>
    <property type="project" value="PomBase"/>
</dbReference>
<dbReference type="GO" id="GO:0006888">
    <property type="term" value="P:endoplasmic reticulum to Golgi vesicle-mediated transport"/>
    <property type="evidence" value="ECO:0000315"/>
    <property type="project" value="PomBase"/>
</dbReference>
<dbReference type="GO" id="GO:0006886">
    <property type="term" value="P:intracellular protein transport"/>
    <property type="evidence" value="ECO:0007669"/>
    <property type="project" value="InterPro"/>
</dbReference>
<dbReference type="GO" id="GO:0061024">
    <property type="term" value="P:membrane organization"/>
    <property type="evidence" value="ECO:0000318"/>
    <property type="project" value="GO_Central"/>
</dbReference>
<dbReference type="GO" id="GO:0003400">
    <property type="term" value="P:regulation of COPII vesicle coating"/>
    <property type="evidence" value="ECO:0000318"/>
    <property type="project" value="GO_Central"/>
</dbReference>
<dbReference type="GO" id="GO:0016050">
    <property type="term" value="P:vesicle organization"/>
    <property type="evidence" value="ECO:0000318"/>
    <property type="project" value="GO_Central"/>
</dbReference>
<dbReference type="CDD" id="cd00879">
    <property type="entry name" value="Sar1"/>
    <property type="match status" value="1"/>
</dbReference>
<dbReference type="FunFam" id="3.40.50.300:FF:000161">
    <property type="entry name" value="Small COPII coat GTPase"/>
    <property type="match status" value="1"/>
</dbReference>
<dbReference type="Gene3D" id="3.40.50.300">
    <property type="entry name" value="P-loop containing nucleotide triphosphate hydrolases"/>
    <property type="match status" value="1"/>
</dbReference>
<dbReference type="InterPro" id="IPR027417">
    <property type="entry name" value="P-loop_NTPase"/>
</dbReference>
<dbReference type="InterPro" id="IPR005225">
    <property type="entry name" value="Small_GTP-bd"/>
</dbReference>
<dbReference type="InterPro" id="IPR006689">
    <property type="entry name" value="Small_GTPase_ARF/SAR"/>
</dbReference>
<dbReference type="InterPro" id="IPR006687">
    <property type="entry name" value="Small_GTPase_SAR1"/>
</dbReference>
<dbReference type="NCBIfam" id="TIGR00231">
    <property type="entry name" value="small_GTP"/>
    <property type="match status" value="1"/>
</dbReference>
<dbReference type="PANTHER" id="PTHR45684">
    <property type="entry name" value="RE74312P"/>
    <property type="match status" value="1"/>
</dbReference>
<dbReference type="Pfam" id="PF00025">
    <property type="entry name" value="Arf"/>
    <property type="match status" value="1"/>
</dbReference>
<dbReference type="PRINTS" id="PR00328">
    <property type="entry name" value="SAR1GTPBP"/>
</dbReference>
<dbReference type="SMART" id="SM00177">
    <property type="entry name" value="ARF"/>
    <property type="match status" value="1"/>
</dbReference>
<dbReference type="SMART" id="SM00178">
    <property type="entry name" value="SAR"/>
    <property type="match status" value="1"/>
</dbReference>
<dbReference type="SUPFAM" id="SSF52540">
    <property type="entry name" value="P-loop containing nucleoside triphosphate hydrolases"/>
    <property type="match status" value="1"/>
</dbReference>
<dbReference type="PROSITE" id="PS51422">
    <property type="entry name" value="SAR1"/>
    <property type="match status" value="1"/>
</dbReference>
<name>SAR1_SCHPO</name>
<gene>
    <name type="primary">sar1</name>
    <name type="ORF">SPBC31F10.06c</name>
</gene>
<comment type="function">
    <text evidence="1 2">Small GTPase component of the coat protein complex II (COPII) which promotes the formation of transport vesicles from the endoplasmic reticulum (ER). The coat has two main functions, the physical deformation of the endoplasmic reticulum membrane into vesicles and the selection of cargo molecules. Sar1 controls the coat assembly in a stepwise manner. Activated sar1-GTP binds to membranes first and recruits the SEC23/24 complex. These sec23/24-sar1 prebudding intermediates are then collected by the sec13/31 complex as subunits polymerize to form coated transport vesicles. Conversion to sar1-GDP triggers coat release and recycles COPII subunits (By similarity).</text>
</comment>
<comment type="catalytic activity">
    <reaction>
        <text>GTP + H2O = GDP + phosphate + H(+)</text>
        <dbReference type="Rhea" id="RHEA:19669"/>
        <dbReference type="ChEBI" id="CHEBI:15377"/>
        <dbReference type="ChEBI" id="CHEBI:15378"/>
        <dbReference type="ChEBI" id="CHEBI:37565"/>
        <dbReference type="ChEBI" id="CHEBI:43474"/>
        <dbReference type="ChEBI" id="CHEBI:58189"/>
    </reaction>
</comment>
<comment type="subunit">
    <text evidence="1">COPII is composed of at least 5 proteins: the sec23/24 complex, the sec13/31 complex and sar1.</text>
</comment>
<comment type="subcellular location">
    <subcellularLocation>
        <location evidence="1">Cytoplasmic vesicle</location>
        <location evidence="1">COPII-coated vesicle membrane</location>
        <topology evidence="1">Peripheral membrane protein</topology>
        <orientation evidence="1">Cytoplasmic side</orientation>
    </subcellularLocation>
    <subcellularLocation>
        <location evidence="1">Endoplasmic reticulum membrane</location>
        <topology evidence="1">Peripheral membrane protein</topology>
        <orientation evidence="1">Cytoplasmic side</orientation>
    </subcellularLocation>
    <subcellularLocation>
        <location evidence="1">Golgi apparatus membrane</location>
        <topology evidence="1">Peripheral membrane protein</topology>
        <orientation evidence="1">Cytoplasmic side</orientation>
    </subcellularLocation>
</comment>
<comment type="similarity">
    <text evidence="4">Belongs to the small GTPase superfamily. SAR1 family.</text>
</comment>
<keyword id="KW-0968">Cytoplasmic vesicle</keyword>
<keyword id="KW-0256">Endoplasmic reticulum</keyword>
<keyword id="KW-0931">ER-Golgi transport</keyword>
<keyword id="KW-0333">Golgi apparatus</keyword>
<keyword id="KW-0342">GTP-binding</keyword>
<keyword id="KW-0378">Hydrolase</keyword>
<keyword id="KW-0472">Membrane</keyword>
<keyword id="KW-0547">Nucleotide-binding</keyword>
<keyword id="KW-0597">Phosphoprotein</keyword>
<keyword id="KW-0653">Protein transport</keyword>
<keyword id="KW-1185">Reference proteome</keyword>
<keyword id="KW-0813">Transport</keyword>
<reference key="1">
    <citation type="journal article" date="1992" name="EMBO J.">
        <title>Fission yeast and a plant have functional homologues of the Sar1 and Sec12 proteins involved in ER to Golgi traffic in budding yeast.</title>
        <authorList>
            <person name="d'Enfert C."/>
            <person name="Gensse M."/>
            <person name="Gaillardin C."/>
        </authorList>
    </citation>
    <scope>NUCLEOTIDE SEQUENCE [MRNA]</scope>
</reference>
<reference key="2">
    <citation type="journal article" date="2002" name="Nature">
        <title>The genome sequence of Schizosaccharomyces pombe.</title>
        <authorList>
            <person name="Wood V."/>
            <person name="Gwilliam R."/>
            <person name="Rajandream M.A."/>
            <person name="Lyne M.H."/>
            <person name="Lyne R."/>
            <person name="Stewart A."/>
            <person name="Sgouros J.G."/>
            <person name="Peat N."/>
            <person name="Hayles J."/>
            <person name="Baker S.G."/>
            <person name="Basham D."/>
            <person name="Bowman S."/>
            <person name="Brooks K."/>
            <person name="Brown D."/>
            <person name="Brown S."/>
            <person name="Chillingworth T."/>
            <person name="Churcher C.M."/>
            <person name="Collins M."/>
            <person name="Connor R."/>
            <person name="Cronin A."/>
            <person name="Davis P."/>
            <person name="Feltwell T."/>
            <person name="Fraser A."/>
            <person name="Gentles S."/>
            <person name="Goble A."/>
            <person name="Hamlin N."/>
            <person name="Harris D.E."/>
            <person name="Hidalgo J."/>
            <person name="Hodgson G."/>
            <person name="Holroyd S."/>
            <person name="Hornsby T."/>
            <person name="Howarth S."/>
            <person name="Huckle E.J."/>
            <person name="Hunt S."/>
            <person name="Jagels K."/>
            <person name="James K.D."/>
            <person name="Jones L."/>
            <person name="Jones M."/>
            <person name="Leather S."/>
            <person name="McDonald S."/>
            <person name="McLean J."/>
            <person name="Mooney P."/>
            <person name="Moule S."/>
            <person name="Mungall K.L."/>
            <person name="Murphy L.D."/>
            <person name="Niblett D."/>
            <person name="Odell C."/>
            <person name="Oliver K."/>
            <person name="O'Neil S."/>
            <person name="Pearson D."/>
            <person name="Quail M.A."/>
            <person name="Rabbinowitsch E."/>
            <person name="Rutherford K.M."/>
            <person name="Rutter S."/>
            <person name="Saunders D."/>
            <person name="Seeger K."/>
            <person name="Sharp S."/>
            <person name="Skelton J."/>
            <person name="Simmonds M.N."/>
            <person name="Squares R."/>
            <person name="Squares S."/>
            <person name="Stevens K."/>
            <person name="Taylor K."/>
            <person name="Taylor R.G."/>
            <person name="Tivey A."/>
            <person name="Walsh S.V."/>
            <person name="Warren T."/>
            <person name="Whitehead S."/>
            <person name="Woodward J.R."/>
            <person name="Volckaert G."/>
            <person name="Aert R."/>
            <person name="Robben J."/>
            <person name="Grymonprez B."/>
            <person name="Weltjens I."/>
            <person name="Vanstreels E."/>
            <person name="Rieger M."/>
            <person name="Schaefer M."/>
            <person name="Mueller-Auer S."/>
            <person name="Gabel C."/>
            <person name="Fuchs M."/>
            <person name="Duesterhoeft A."/>
            <person name="Fritzc C."/>
            <person name="Holzer E."/>
            <person name="Moestl D."/>
            <person name="Hilbert H."/>
            <person name="Borzym K."/>
            <person name="Langer I."/>
            <person name="Beck A."/>
            <person name="Lehrach H."/>
            <person name="Reinhardt R."/>
            <person name="Pohl T.M."/>
            <person name="Eger P."/>
            <person name="Zimmermann W."/>
            <person name="Wedler H."/>
            <person name="Wambutt R."/>
            <person name="Purnelle B."/>
            <person name="Goffeau A."/>
            <person name="Cadieu E."/>
            <person name="Dreano S."/>
            <person name="Gloux S."/>
            <person name="Lelaure V."/>
            <person name="Mottier S."/>
            <person name="Galibert F."/>
            <person name="Aves S.J."/>
            <person name="Xiang Z."/>
            <person name="Hunt C."/>
            <person name="Moore K."/>
            <person name="Hurst S.M."/>
            <person name="Lucas M."/>
            <person name="Rochet M."/>
            <person name="Gaillardin C."/>
            <person name="Tallada V.A."/>
            <person name="Garzon A."/>
            <person name="Thode G."/>
            <person name="Daga R.R."/>
            <person name="Cruzado L."/>
            <person name="Jimenez J."/>
            <person name="Sanchez M."/>
            <person name="del Rey F."/>
            <person name="Benito J."/>
            <person name="Dominguez A."/>
            <person name="Revuelta J.L."/>
            <person name="Moreno S."/>
            <person name="Armstrong J."/>
            <person name="Forsburg S.L."/>
            <person name="Cerutti L."/>
            <person name="Lowe T."/>
            <person name="McCombie W.R."/>
            <person name="Paulsen I."/>
            <person name="Potashkin J."/>
            <person name="Shpakovski G.V."/>
            <person name="Ussery D."/>
            <person name="Barrell B.G."/>
            <person name="Nurse P."/>
        </authorList>
    </citation>
    <scope>NUCLEOTIDE SEQUENCE [LARGE SCALE GENOMIC DNA]</scope>
    <source>
        <strain>972 / ATCC 24843</strain>
    </source>
</reference>
<reference key="3">
    <citation type="journal article" date="2002" name="J. Cell Sci.">
        <title>Three proteins required for early steps in the protein secretory pathway also affect nuclear envelope structure and cell cycle progression in fission yeast.</title>
        <authorList>
            <person name="Matynia A."/>
            <person name="Salus S.S."/>
            <person name="Sazer S."/>
        </authorList>
    </citation>
    <scope>FUNCTION</scope>
</reference>
<reference key="4">
    <citation type="journal article" date="2006" name="Nat. Biotechnol.">
        <title>ORFeome cloning and global analysis of protein localization in the fission yeast Schizosaccharomyces pombe.</title>
        <authorList>
            <person name="Matsuyama A."/>
            <person name="Arai R."/>
            <person name="Yashiroda Y."/>
            <person name="Shirai A."/>
            <person name="Kamata A."/>
            <person name="Sekido S."/>
            <person name="Kobayashi Y."/>
            <person name="Hashimoto A."/>
            <person name="Hamamoto M."/>
            <person name="Hiraoka Y."/>
            <person name="Horinouchi S."/>
            <person name="Yoshida M."/>
        </authorList>
    </citation>
    <scope>SUBCELLULAR LOCATION [LARGE SCALE ANALYSIS]</scope>
</reference>
<reference key="5">
    <citation type="journal article" date="2008" name="J. Proteome Res.">
        <title>Phosphoproteome analysis of fission yeast.</title>
        <authorList>
            <person name="Wilson-Grady J.T."/>
            <person name="Villen J."/>
            <person name="Gygi S.P."/>
        </authorList>
    </citation>
    <scope>PHOSPHORYLATION [LARGE SCALE ANALYSIS] AT SER-138</scope>
    <scope>IDENTIFICATION BY MASS SPECTROMETRY</scope>
</reference>
<sequence length="190" mass="21280">MFIINWFYDALAMLGLVNKHAKMLFLGLDNAGKTTLLHMLKNDRLAVMQPTLHPTSEELAIGNVRFTTFDLGGHQQARRLWRDYFPEVNGIVYLVDCCDFERLSESKAELDALLAMEELARVPFLILGNKIDAPGAISEDELKAALGLYQTTGKGVSKPVPGIRPIEVFMCSVVLRQGYGEGFKWLAQYV</sequence>
<feature type="chain" id="PRO_0000206273" description="Small COPII coat GTPase sar1">
    <location>
        <begin position="1"/>
        <end position="190"/>
    </location>
</feature>
<feature type="binding site" evidence="1">
    <location>
        <begin position="27"/>
        <end position="34"/>
    </location>
    <ligand>
        <name>GTP</name>
        <dbReference type="ChEBI" id="CHEBI:37565"/>
    </ligand>
</feature>
<feature type="binding site" evidence="1">
    <location>
        <begin position="70"/>
        <end position="73"/>
    </location>
    <ligand>
        <name>GTP</name>
        <dbReference type="ChEBI" id="CHEBI:37565"/>
    </ligand>
</feature>
<feature type="binding site" evidence="1">
    <location>
        <begin position="129"/>
        <end position="132"/>
    </location>
    <ligand>
        <name>GTP</name>
        <dbReference type="ChEBI" id="CHEBI:37565"/>
    </ligand>
</feature>
<feature type="modified residue" description="Phosphoserine" evidence="3">
    <location>
        <position position="138"/>
    </location>
</feature>
<evidence type="ECO:0000250" key="1"/>
<evidence type="ECO:0000269" key="2">
    <source>
    </source>
</evidence>
<evidence type="ECO:0000269" key="3">
    <source>
    </source>
</evidence>
<evidence type="ECO:0000305" key="4"/>
<proteinExistence type="evidence at protein level"/>
<organism>
    <name type="scientific">Schizosaccharomyces pombe (strain 972 / ATCC 24843)</name>
    <name type="common">Fission yeast</name>
    <dbReference type="NCBI Taxonomy" id="284812"/>
    <lineage>
        <taxon>Eukaryota</taxon>
        <taxon>Fungi</taxon>
        <taxon>Dikarya</taxon>
        <taxon>Ascomycota</taxon>
        <taxon>Taphrinomycotina</taxon>
        <taxon>Schizosaccharomycetes</taxon>
        <taxon>Schizosaccharomycetales</taxon>
        <taxon>Schizosaccharomycetaceae</taxon>
        <taxon>Schizosaccharomyces</taxon>
    </lineage>
</organism>
<accession>Q01475</accession>
<protein>
    <recommendedName>
        <fullName>Small COPII coat GTPase sar1</fullName>
        <ecNumber>3.6.5.-</ecNumber>
    </recommendedName>
</protein>